<name>MCSB_BACAC</name>
<proteinExistence type="inferred from homology"/>
<dbReference type="EC" id="2.7.14.1" evidence="1"/>
<dbReference type="EMBL" id="CP001215">
    <property type="protein sequence ID" value="ACP13511.1"/>
    <property type="molecule type" value="Genomic_DNA"/>
</dbReference>
<dbReference type="RefSeq" id="WP_000050832.1">
    <property type="nucleotide sequence ID" value="NC_012581.1"/>
</dbReference>
<dbReference type="SMR" id="C3LJ53"/>
<dbReference type="KEGG" id="bah:BAMEG_0096"/>
<dbReference type="HOGENOM" id="CLU_066591_1_0_9"/>
<dbReference type="GO" id="GO:0005615">
    <property type="term" value="C:extracellular space"/>
    <property type="evidence" value="ECO:0007669"/>
    <property type="project" value="TreeGrafter"/>
</dbReference>
<dbReference type="GO" id="GO:0005524">
    <property type="term" value="F:ATP binding"/>
    <property type="evidence" value="ECO:0007669"/>
    <property type="project" value="UniProtKB-KW"/>
</dbReference>
<dbReference type="GO" id="GO:0004111">
    <property type="term" value="F:creatine kinase activity"/>
    <property type="evidence" value="ECO:0007669"/>
    <property type="project" value="InterPro"/>
</dbReference>
<dbReference type="GO" id="GO:0004672">
    <property type="term" value="F:protein kinase activity"/>
    <property type="evidence" value="ECO:0007669"/>
    <property type="project" value="UniProtKB-UniRule"/>
</dbReference>
<dbReference type="GO" id="GO:0046314">
    <property type="term" value="P:phosphocreatine biosynthetic process"/>
    <property type="evidence" value="ECO:0007669"/>
    <property type="project" value="InterPro"/>
</dbReference>
<dbReference type="CDD" id="cd07930">
    <property type="entry name" value="bacterial_phosphagen_kinase"/>
    <property type="match status" value="1"/>
</dbReference>
<dbReference type="FunFam" id="3.30.590.10:FF:000007">
    <property type="entry name" value="Protein-arginine kinase"/>
    <property type="match status" value="1"/>
</dbReference>
<dbReference type="Gene3D" id="3.30.590.10">
    <property type="entry name" value="Glutamine synthetase/guanido kinase, catalytic domain"/>
    <property type="match status" value="1"/>
</dbReference>
<dbReference type="HAMAP" id="MF_00602">
    <property type="entry name" value="Prot_Arg_kinase"/>
    <property type="match status" value="1"/>
</dbReference>
<dbReference type="InterPro" id="IPR023660">
    <property type="entry name" value="Arg_Kinase"/>
</dbReference>
<dbReference type="InterPro" id="IPR000749">
    <property type="entry name" value="ATP-guanido_PTrfase"/>
</dbReference>
<dbReference type="InterPro" id="IPR022415">
    <property type="entry name" value="ATP-guanido_PTrfase_AS"/>
</dbReference>
<dbReference type="InterPro" id="IPR022414">
    <property type="entry name" value="ATP-guanido_PTrfase_cat"/>
</dbReference>
<dbReference type="InterPro" id="IPR014746">
    <property type="entry name" value="Gln_synth/guanido_kin_cat_dom"/>
</dbReference>
<dbReference type="NCBIfam" id="NF002194">
    <property type="entry name" value="PRK01059.1-4"/>
    <property type="match status" value="1"/>
</dbReference>
<dbReference type="NCBIfam" id="NF002195">
    <property type="entry name" value="PRK01059.1-5"/>
    <property type="match status" value="1"/>
</dbReference>
<dbReference type="PANTHER" id="PTHR11547:SF38">
    <property type="entry name" value="ARGININE KINASE 1-RELATED"/>
    <property type="match status" value="1"/>
</dbReference>
<dbReference type="PANTHER" id="PTHR11547">
    <property type="entry name" value="ARGININE OR CREATINE KINASE"/>
    <property type="match status" value="1"/>
</dbReference>
<dbReference type="Pfam" id="PF00217">
    <property type="entry name" value="ATP-gua_Ptrans"/>
    <property type="match status" value="1"/>
</dbReference>
<dbReference type="SUPFAM" id="SSF55931">
    <property type="entry name" value="Glutamine synthetase/guanido kinase"/>
    <property type="match status" value="1"/>
</dbReference>
<dbReference type="PROSITE" id="PS00112">
    <property type="entry name" value="PHOSPHAGEN_KINASE"/>
    <property type="match status" value="1"/>
</dbReference>
<dbReference type="PROSITE" id="PS51510">
    <property type="entry name" value="PHOSPHAGEN_KINASE_C"/>
    <property type="match status" value="1"/>
</dbReference>
<feature type="chain" id="PRO_1000147057" description="Protein-arginine kinase">
    <location>
        <begin position="1"/>
        <end position="354"/>
    </location>
</feature>
<feature type="domain" description="Phosphagen kinase C-terminal" evidence="1">
    <location>
        <begin position="24"/>
        <end position="254"/>
    </location>
</feature>
<feature type="short sequence motif" description="RDXXRA motif of the pArg binding pocket involved in allosteric regulation" evidence="1">
    <location>
        <begin position="337"/>
        <end position="342"/>
    </location>
</feature>
<feature type="binding site" evidence="1">
    <location>
        <begin position="27"/>
        <end position="31"/>
    </location>
    <ligand>
        <name>ATP</name>
        <dbReference type="ChEBI" id="CHEBI:30616"/>
    </ligand>
</feature>
<feature type="binding site" evidence="1">
    <location>
        <position position="92"/>
    </location>
    <ligand>
        <name>ATP</name>
        <dbReference type="ChEBI" id="CHEBI:30616"/>
    </ligand>
</feature>
<feature type="binding site" evidence="1">
    <location>
        <position position="125"/>
    </location>
    <ligand>
        <name>ATP</name>
        <dbReference type="ChEBI" id="CHEBI:30616"/>
    </ligand>
</feature>
<feature type="binding site" evidence="1">
    <location>
        <begin position="176"/>
        <end position="180"/>
    </location>
    <ligand>
        <name>ATP</name>
        <dbReference type="ChEBI" id="CHEBI:30616"/>
    </ligand>
</feature>
<feature type="binding site" evidence="1">
    <location>
        <begin position="207"/>
        <end position="212"/>
    </location>
    <ligand>
        <name>ATP</name>
        <dbReference type="ChEBI" id="CHEBI:30616"/>
    </ligand>
</feature>
<keyword id="KW-0021">Allosteric enzyme</keyword>
<keyword id="KW-0067">ATP-binding</keyword>
<keyword id="KW-0418">Kinase</keyword>
<keyword id="KW-0547">Nucleotide-binding</keyword>
<keyword id="KW-0808">Transferase</keyword>
<protein>
    <recommendedName>
        <fullName evidence="1">Protein-arginine kinase</fullName>
        <ecNumber evidence="1">2.7.14.1</ecNumber>
    </recommendedName>
</protein>
<accession>C3LJ53</accession>
<evidence type="ECO:0000255" key="1">
    <source>
        <dbReference type="HAMAP-Rule" id="MF_00602"/>
    </source>
</evidence>
<reference key="1">
    <citation type="submission" date="2008-10" db="EMBL/GenBank/DDBJ databases">
        <title>Genome sequence of Bacillus anthracis str. CDC 684.</title>
        <authorList>
            <person name="Dodson R.J."/>
            <person name="Munk A.C."/>
            <person name="Brettin T."/>
            <person name="Bruce D."/>
            <person name="Detter C."/>
            <person name="Tapia R."/>
            <person name="Han C."/>
            <person name="Sutton G."/>
            <person name="Sims D."/>
        </authorList>
    </citation>
    <scope>NUCLEOTIDE SEQUENCE [LARGE SCALE GENOMIC DNA]</scope>
    <source>
        <strain>CDC 684 / NRRL 3495</strain>
    </source>
</reference>
<comment type="function">
    <text evidence="1">Catalyzes the specific phosphorylation of arginine residues in a large number of proteins. Is part of the bacterial stress response system. Protein arginine phosphorylation has a physiologically important role and is involved in the regulation of many critical cellular processes, such as protein homeostasis, motility, competence, and stringent and stress responses, by regulating gene expression and protein activity.</text>
</comment>
<comment type="catalytic activity">
    <reaction evidence="1">
        <text>L-arginyl-[protein] + ATP = N(omega)-phospho-L-arginyl-[protein] + ADP + H(+)</text>
        <dbReference type="Rhea" id="RHEA:43384"/>
        <dbReference type="Rhea" id="RHEA-COMP:10532"/>
        <dbReference type="Rhea" id="RHEA-COMP:10533"/>
        <dbReference type="ChEBI" id="CHEBI:15378"/>
        <dbReference type="ChEBI" id="CHEBI:29965"/>
        <dbReference type="ChEBI" id="CHEBI:30616"/>
        <dbReference type="ChEBI" id="CHEBI:83226"/>
        <dbReference type="ChEBI" id="CHEBI:456216"/>
        <dbReference type="EC" id="2.7.14.1"/>
    </reaction>
</comment>
<comment type="activity regulation">
    <text evidence="1">Appears to be allosterically activated by the binding of pArg-containing polypeptides to the pArg-binding pocket localized in the C-terminal domain of McsB.</text>
</comment>
<comment type="similarity">
    <text evidence="1">Belongs to the ATP:guanido phosphotransferase family.</text>
</comment>
<gene>
    <name evidence="1" type="primary">mcsB</name>
    <name type="ordered locus">BAMEG_0096</name>
</gene>
<organism>
    <name type="scientific">Bacillus anthracis (strain CDC 684 / NRRL 3495)</name>
    <dbReference type="NCBI Taxonomy" id="568206"/>
    <lineage>
        <taxon>Bacteria</taxon>
        <taxon>Bacillati</taxon>
        <taxon>Bacillota</taxon>
        <taxon>Bacilli</taxon>
        <taxon>Bacillales</taxon>
        <taxon>Bacillaceae</taxon>
        <taxon>Bacillus</taxon>
        <taxon>Bacillus cereus group</taxon>
    </lineage>
</organism>
<sequence length="354" mass="40035">MSLDKIMNEAISPWMKGDGPDSDIVLSSRIRLARNFKKYQFSTMQNEEETKQIQELFKKEFINKTVEPFGEFELLKMNELTPLQRRVLVEKHLISPNLAGTEYGACLLSESEHISVMLNEEDHIRIQCLFSGLQLSEALQSANQIDNWIEKEVEYAFDESLGYITSCPTNVGTGLRASVMIHLPGLVLTKRISRIIQVIQKLGLVVRGIYGEGSEALGNIFQVSNQMTLGKSEEDIIADLKSVIQQIIQQEKMARELIVQNSSIELEDKVYRSYGILANSRLIQSAEAANCLSDLRLGIDLGYIQGISRNILTELMVLTQPGILQQYAGGPLGPEERDYRRATLIRERLRIEKN</sequence>